<sequence length="200" mass="22418">MKRKNNKFIEISIAFILGIALGLYGQNPDYFTNLISQKSLALSALQIKHYNISELSRSKVSTCFTPPAGCTKFIANQIDKAEESIYMQAYGMSDALITTALINAQARGVKVRILLDRSNLKQKFSKLHELQRAKIDVDIDKVPGIAHNKVIIIDKKKVITGSFNFTAAADKRNAENVIIIEDQELAESYLQNWLNRKASN</sequence>
<comment type="function">
    <text evidence="3">Could be a virulence factor.</text>
</comment>
<comment type="catalytic activity">
    <reaction evidence="3">
        <text>a 1,2-diacyl-sn-glycero-3-phosphocholine + H2O = a 1,2-diacyl-sn-glycero-3-phosphate + choline + H(+)</text>
        <dbReference type="Rhea" id="RHEA:14445"/>
        <dbReference type="ChEBI" id="CHEBI:15354"/>
        <dbReference type="ChEBI" id="CHEBI:15377"/>
        <dbReference type="ChEBI" id="CHEBI:15378"/>
        <dbReference type="ChEBI" id="CHEBI:57643"/>
        <dbReference type="ChEBI" id="CHEBI:58608"/>
        <dbReference type="EC" id="3.1.4.4"/>
    </reaction>
</comment>
<comment type="subunit">
    <text evidence="3">Homodimer.</text>
</comment>
<comment type="subcellular location">
    <subcellularLocation>
        <location evidence="4">Secreted</location>
    </subcellularLocation>
</comment>
<comment type="similarity">
    <text evidence="4">Belongs to the phospholipase D family.</text>
</comment>
<name>PLD_RICCN</name>
<accession>Q92G53</accession>
<evidence type="ECO:0000255" key="1"/>
<evidence type="ECO:0000255" key="2">
    <source>
        <dbReference type="PROSITE-ProRule" id="PRU00153"/>
    </source>
</evidence>
<evidence type="ECO:0000269" key="3">
    <source>
    </source>
</evidence>
<evidence type="ECO:0000305" key="4"/>
<dbReference type="EC" id="3.1.4.4"/>
<dbReference type="EMBL" id="AE006914">
    <property type="protein sequence ID" value="AAL03808.1"/>
    <property type="molecule type" value="Genomic_DNA"/>
</dbReference>
<dbReference type="PIR" id="F97858">
    <property type="entry name" value="F97858"/>
</dbReference>
<dbReference type="RefSeq" id="WP_010977832.1">
    <property type="nucleotide sequence ID" value="NC_003103.1"/>
</dbReference>
<dbReference type="SMR" id="Q92G53"/>
<dbReference type="GeneID" id="928420"/>
<dbReference type="KEGG" id="rco:RC1270"/>
<dbReference type="HOGENOM" id="CLU_080814_3_0_5"/>
<dbReference type="Proteomes" id="UP000000816">
    <property type="component" value="Chromosome"/>
</dbReference>
<dbReference type="GO" id="GO:0005576">
    <property type="term" value="C:extracellular region"/>
    <property type="evidence" value="ECO:0007669"/>
    <property type="project" value="UniProtKB-SubCell"/>
</dbReference>
<dbReference type="GO" id="GO:0004630">
    <property type="term" value="F:phospholipase D activity"/>
    <property type="evidence" value="ECO:0007669"/>
    <property type="project" value="UniProtKB-EC"/>
</dbReference>
<dbReference type="GO" id="GO:0016891">
    <property type="term" value="F:RNA endonuclease activity, producing 5'-phosphomonoesters"/>
    <property type="evidence" value="ECO:0007669"/>
    <property type="project" value="TreeGrafter"/>
</dbReference>
<dbReference type="GO" id="GO:0016042">
    <property type="term" value="P:lipid catabolic process"/>
    <property type="evidence" value="ECO:0007669"/>
    <property type="project" value="UniProtKB-KW"/>
</dbReference>
<dbReference type="GO" id="GO:0006793">
    <property type="term" value="P:phosphorus metabolic process"/>
    <property type="evidence" value="ECO:0007669"/>
    <property type="project" value="UniProtKB-ARBA"/>
</dbReference>
<dbReference type="CDD" id="cd09170">
    <property type="entry name" value="PLDc_Nuc"/>
    <property type="match status" value="1"/>
</dbReference>
<dbReference type="Gene3D" id="3.30.870.10">
    <property type="entry name" value="Endonuclease Chain A"/>
    <property type="match status" value="1"/>
</dbReference>
<dbReference type="InterPro" id="IPR025202">
    <property type="entry name" value="PLD-like_dom"/>
</dbReference>
<dbReference type="InterPro" id="IPR051406">
    <property type="entry name" value="PLD_domain"/>
</dbReference>
<dbReference type="InterPro" id="IPR001736">
    <property type="entry name" value="PLipase_D/transphosphatidylase"/>
</dbReference>
<dbReference type="PANTHER" id="PTHR43856">
    <property type="entry name" value="CARDIOLIPIN HYDROLASE"/>
    <property type="match status" value="1"/>
</dbReference>
<dbReference type="PANTHER" id="PTHR43856:SF1">
    <property type="entry name" value="MITOCHONDRIAL CARDIOLIPIN HYDROLASE"/>
    <property type="match status" value="1"/>
</dbReference>
<dbReference type="Pfam" id="PF13091">
    <property type="entry name" value="PLDc_2"/>
    <property type="match status" value="1"/>
</dbReference>
<dbReference type="SMART" id="SM00155">
    <property type="entry name" value="PLDc"/>
    <property type="match status" value="1"/>
</dbReference>
<dbReference type="SUPFAM" id="SSF56024">
    <property type="entry name" value="Phospholipase D/nuclease"/>
    <property type="match status" value="1"/>
</dbReference>
<dbReference type="PROSITE" id="PS50035">
    <property type="entry name" value="PLD"/>
    <property type="match status" value="1"/>
</dbReference>
<reference key="1">
    <citation type="journal article" date="2001" name="Science">
        <title>Mechanisms of evolution in Rickettsia conorii and R. prowazekii.</title>
        <authorList>
            <person name="Ogata H."/>
            <person name="Audic S."/>
            <person name="Renesto-Audiffren P."/>
            <person name="Fournier P.-E."/>
            <person name="Barbe V."/>
            <person name="Samson D."/>
            <person name="Roux V."/>
            <person name="Cossart P."/>
            <person name="Weissenbach J."/>
            <person name="Claverie J.-M."/>
            <person name="Raoult D."/>
        </authorList>
    </citation>
    <scope>NUCLEOTIDE SEQUENCE [LARGE SCALE GENOMIC DNA]</scope>
    <source>
        <strain>ATCC VR-613 / Malish 7</strain>
    </source>
</reference>
<reference key="2">
    <citation type="journal article" date="2003" name="J. Infect. Dis.">
        <title>Identification and characterization of a phospholipase D-superfamily gene in Rickettsiae.</title>
        <authorList>
            <person name="Renesto P."/>
            <person name="Dehoux P."/>
            <person name="Gouin E."/>
            <person name="Touqui L."/>
            <person name="Cossart P."/>
            <person name="Raoult D."/>
        </authorList>
    </citation>
    <scope>PROTEIN SEQUENCE OF 58-77</scope>
    <scope>FUNCTION</scope>
    <scope>SUBUNIT</scope>
    <scope>CATALYTIC ACTIVITY</scope>
    <source>
        <strain>ATCC VR-613 / Malish 7</strain>
    </source>
</reference>
<protein>
    <recommendedName>
        <fullName>Phospholipase D</fullName>
        <shortName>PLD</shortName>
        <ecNumber>3.1.4.4</ecNumber>
    </recommendedName>
    <alternativeName>
        <fullName>Choline phosphatase</fullName>
    </alternativeName>
</protein>
<proteinExistence type="evidence at protein level"/>
<organism>
    <name type="scientific">Rickettsia conorii (strain ATCC VR-613 / Malish 7)</name>
    <dbReference type="NCBI Taxonomy" id="272944"/>
    <lineage>
        <taxon>Bacteria</taxon>
        <taxon>Pseudomonadati</taxon>
        <taxon>Pseudomonadota</taxon>
        <taxon>Alphaproteobacteria</taxon>
        <taxon>Rickettsiales</taxon>
        <taxon>Rickettsiaceae</taxon>
        <taxon>Rickettsieae</taxon>
        <taxon>Rickettsia</taxon>
        <taxon>spotted fever group</taxon>
    </lineage>
</organism>
<gene>
    <name type="primary">pld</name>
    <name type="ordered locus">RC1270</name>
</gene>
<keyword id="KW-0903">Direct protein sequencing</keyword>
<keyword id="KW-0378">Hydrolase</keyword>
<keyword id="KW-0442">Lipid degradation</keyword>
<keyword id="KW-0443">Lipid metabolism</keyword>
<keyword id="KW-0964">Secreted</keyword>
<keyword id="KW-0732">Signal</keyword>
<keyword id="KW-0843">Virulence</keyword>
<feature type="signal peptide" evidence="1">
    <location>
        <begin position="1"/>
        <end position="25"/>
    </location>
</feature>
<feature type="chain" id="PRO_0000274781" description="Phospholipase D">
    <location>
        <begin position="26"/>
        <end position="200"/>
    </location>
</feature>
<feature type="domain" description="PLD phosphodiesterase" evidence="2">
    <location>
        <begin position="142"/>
        <end position="169"/>
    </location>
</feature>
<feature type="active site" evidence="2">
    <location>
        <position position="147"/>
    </location>
</feature>
<feature type="active site" evidence="2">
    <location>
        <position position="149"/>
    </location>
</feature>
<feature type="active site" evidence="2">
    <location>
        <position position="154"/>
    </location>
</feature>